<name>HSCA_BURP1</name>
<evidence type="ECO:0000255" key="1">
    <source>
        <dbReference type="HAMAP-Rule" id="MF_00679"/>
    </source>
</evidence>
<comment type="function">
    <text evidence="1">Chaperone involved in the maturation of iron-sulfur cluster-containing proteins. Has a low intrinsic ATPase activity which is markedly stimulated by HscB.</text>
</comment>
<comment type="similarity">
    <text evidence="1">Belongs to the heat shock protein 70 family.</text>
</comment>
<feature type="chain" id="PRO_1000044850" description="Chaperone protein HscA homolog">
    <location>
        <begin position="1"/>
        <end position="622"/>
    </location>
</feature>
<dbReference type="EMBL" id="CP000124">
    <property type="protein sequence ID" value="ABA50192.1"/>
    <property type="molecule type" value="Genomic_DNA"/>
</dbReference>
<dbReference type="RefSeq" id="WP_004527365.1">
    <property type="nucleotide sequence ID" value="NC_007434.1"/>
</dbReference>
<dbReference type="SMR" id="Q3JQN9"/>
<dbReference type="EnsemblBacteria" id="ABA50192">
    <property type="protein sequence ID" value="ABA50192"/>
    <property type="gene ID" value="BURPS1710b_2728"/>
</dbReference>
<dbReference type="KEGG" id="bpm:BURPS1710b_2728"/>
<dbReference type="HOGENOM" id="CLU_005965_2_1_4"/>
<dbReference type="Proteomes" id="UP000002700">
    <property type="component" value="Chromosome I"/>
</dbReference>
<dbReference type="GO" id="GO:0005524">
    <property type="term" value="F:ATP binding"/>
    <property type="evidence" value="ECO:0007669"/>
    <property type="project" value="UniProtKB-KW"/>
</dbReference>
<dbReference type="GO" id="GO:0016887">
    <property type="term" value="F:ATP hydrolysis activity"/>
    <property type="evidence" value="ECO:0007669"/>
    <property type="project" value="UniProtKB-UniRule"/>
</dbReference>
<dbReference type="GO" id="GO:0140662">
    <property type="term" value="F:ATP-dependent protein folding chaperone"/>
    <property type="evidence" value="ECO:0007669"/>
    <property type="project" value="InterPro"/>
</dbReference>
<dbReference type="GO" id="GO:0051082">
    <property type="term" value="F:unfolded protein binding"/>
    <property type="evidence" value="ECO:0007669"/>
    <property type="project" value="InterPro"/>
</dbReference>
<dbReference type="GO" id="GO:0016226">
    <property type="term" value="P:iron-sulfur cluster assembly"/>
    <property type="evidence" value="ECO:0007669"/>
    <property type="project" value="InterPro"/>
</dbReference>
<dbReference type="FunFam" id="3.30.420.40:FF:000046">
    <property type="entry name" value="Chaperone protein HscA"/>
    <property type="match status" value="1"/>
</dbReference>
<dbReference type="FunFam" id="2.60.34.10:FF:000005">
    <property type="entry name" value="Chaperone protein HscA homolog"/>
    <property type="match status" value="1"/>
</dbReference>
<dbReference type="Gene3D" id="1.20.1270.10">
    <property type="match status" value="1"/>
</dbReference>
<dbReference type="Gene3D" id="3.30.420.40">
    <property type="match status" value="2"/>
</dbReference>
<dbReference type="Gene3D" id="3.90.640.10">
    <property type="entry name" value="Actin, Chain A, domain 4"/>
    <property type="match status" value="1"/>
</dbReference>
<dbReference type="Gene3D" id="2.60.34.10">
    <property type="entry name" value="Substrate Binding Domain Of DNAk, Chain A, domain 1"/>
    <property type="match status" value="1"/>
</dbReference>
<dbReference type="HAMAP" id="MF_00679">
    <property type="entry name" value="HscA"/>
    <property type="match status" value="1"/>
</dbReference>
<dbReference type="InterPro" id="IPR043129">
    <property type="entry name" value="ATPase_NBD"/>
</dbReference>
<dbReference type="InterPro" id="IPR018181">
    <property type="entry name" value="Heat_shock_70_CS"/>
</dbReference>
<dbReference type="InterPro" id="IPR029048">
    <property type="entry name" value="HSP70_C_sf"/>
</dbReference>
<dbReference type="InterPro" id="IPR029047">
    <property type="entry name" value="HSP70_peptide-bd_sf"/>
</dbReference>
<dbReference type="InterPro" id="IPR013126">
    <property type="entry name" value="Hsp_70_fam"/>
</dbReference>
<dbReference type="InterPro" id="IPR010236">
    <property type="entry name" value="ISC_FeS_clus_asmbl_HscA"/>
</dbReference>
<dbReference type="NCBIfam" id="TIGR01991">
    <property type="entry name" value="HscA"/>
    <property type="match status" value="1"/>
</dbReference>
<dbReference type="NCBIfam" id="NF003520">
    <property type="entry name" value="PRK05183.1"/>
    <property type="match status" value="1"/>
</dbReference>
<dbReference type="PANTHER" id="PTHR19375">
    <property type="entry name" value="HEAT SHOCK PROTEIN 70KDA"/>
    <property type="match status" value="1"/>
</dbReference>
<dbReference type="Pfam" id="PF00012">
    <property type="entry name" value="HSP70"/>
    <property type="match status" value="1"/>
</dbReference>
<dbReference type="PRINTS" id="PR00301">
    <property type="entry name" value="HEATSHOCK70"/>
</dbReference>
<dbReference type="SUPFAM" id="SSF53067">
    <property type="entry name" value="Actin-like ATPase domain"/>
    <property type="match status" value="2"/>
</dbReference>
<dbReference type="SUPFAM" id="SSF100934">
    <property type="entry name" value="Heat shock protein 70kD (HSP70), C-terminal subdomain"/>
    <property type="match status" value="1"/>
</dbReference>
<dbReference type="SUPFAM" id="SSF100920">
    <property type="entry name" value="Heat shock protein 70kD (HSP70), peptide-binding domain"/>
    <property type="match status" value="1"/>
</dbReference>
<dbReference type="PROSITE" id="PS00297">
    <property type="entry name" value="HSP70_1"/>
    <property type="match status" value="1"/>
</dbReference>
<dbReference type="PROSITE" id="PS00329">
    <property type="entry name" value="HSP70_2"/>
    <property type="match status" value="1"/>
</dbReference>
<dbReference type="PROSITE" id="PS01036">
    <property type="entry name" value="HSP70_3"/>
    <property type="match status" value="1"/>
</dbReference>
<accession>Q3JQN9</accession>
<protein>
    <recommendedName>
        <fullName evidence="1">Chaperone protein HscA homolog</fullName>
    </recommendedName>
</protein>
<gene>
    <name evidence="1" type="primary">hscA</name>
    <name type="ordered locus">BURPS1710b_2728</name>
</gene>
<reference key="1">
    <citation type="journal article" date="2010" name="Genome Biol. Evol.">
        <title>Continuing evolution of Burkholderia mallei through genome reduction and large-scale rearrangements.</title>
        <authorList>
            <person name="Losada L."/>
            <person name="Ronning C.M."/>
            <person name="DeShazer D."/>
            <person name="Woods D."/>
            <person name="Fedorova N."/>
            <person name="Kim H.S."/>
            <person name="Shabalina S.A."/>
            <person name="Pearson T.R."/>
            <person name="Brinkac L."/>
            <person name="Tan P."/>
            <person name="Nandi T."/>
            <person name="Crabtree J."/>
            <person name="Badger J."/>
            <person name="Beckstrom-Sternberg S."/>
            <person name="Saqib M."/>
            <person name="Schutzer S.E."/>
            <person name="Keim P."/>
            <person name="Nierman W.C."/>
        </authorList>
    </citation>
    <scope>NUCLEOTIDE SEQUENCE [LARGE SCALE GENOMIC DNA]</scope>
    <source>
        <strain>1710b</strain>
    </source>
</reference>
<keyword id="KW-0067">ATP-binding</keyword>
<keyword id="KW-0143">Chaperone</keyword>
<keyword id="KW-0547">Nucleotide-binding</keyword>
<sequence length="622" mass="65766">MALLQISEPGMAPAPHQRRLAVGIDLGTTNSLVAAVRNSIPEALPDDAGRVLLPSVVRYLDKGGRRIGHAAKEEAAIDPRNTIVSVKRFMGRGKAEVEGAANAPYEFVDAPGMVQIRTVDGVKSPVEVSAEILATLRQRAEDTLGDDLVGAVITVPAYFDDAQRQATKDAARLAGLNVLRLLNEPTAAAIAYGLDNGAEGLYAVYDLGGGTFDLSILKLTKGVFEVLAAGGDSALGGDDFDHLLFEHVLAQAGLEAAALAPEDVRLLLDRVRGAKEALSAAPQARVDVKLSTGEKLAQTITRDTFAALVEPLVQRTLGPTRKALRDAQVSAADIKGVVLVGGATRMPVIRDAVAKYFGQPPLVNLDPDQVVALGAAIQADLLAGNRSGGDDWLLLDVIPLSLGVETMGGLVEKIIPRNSTIPVARAQEFTTFKDGQTAMAIHVVQGERELVSDCRSLARFELRGIPPMTAGAARIRVTYQVDADGLLSVFAREQHSGVEASVVVKPSYGLGDDDIARMLEDSFKTAEVDMRARALREAQVEAQRLVEATEAALVADGDLLDASERATVDALVVSLRALAPGDDADAIDAATKALAEGTDEFAARRMDKSIKRALAGRKLDEI</sequence>
<organism>
    <name type="scientific">Burkholderia pseudomallei (strain 1710b)</name>
    <dbReference type="NCBI Taxonomy" id="320372"/>
    <lineage>
        <taxon>Bacteria</taxon>
        <taxon>Pseudomonadati</taxon>
        <taxon>Pseudomonadota</taxon>
        <taxon>Betaproteobacteria</taxon>
        <taxon>Burkholderiales</taxon>
        <taxon>Burkholderiaceae</taxon>
        <taxon>Burkholderia</taxon>
        <taxon>pseudomallei group</taxon>
    </lineage>
</organism>
<proteinExistence type="inferred from homology"/>